<dbReference type="EC" id="3.1.3.5" evidence="1"/>
<dbReference type="EMBL" id="BA000031">
    <property type="protein sequence ID" value="BAC60819.1"/>
    <property type="molecule type" value="Genomic_DNA"/>
</dbReference>
<dbReference type="RefSeq" id="NP_798935.1">
    <property type="nucleotide sequence ID" value="NC_004603.1"/>
</dbReference>
<dbReference type="RefSeq" id="WP_005478553.1">
    <property type="nucleotide sequence ID" value="NC_004603.1"/>
</dbReference>
<dbReference type="SMR" id="Q87LQ5"/>
<dbReference type="GeneID" id="1190080"/>
<dbReference type="KEGG" id="vpa:VP2556"/>
<dbReference type="PATRIC" id="fig|223926.6.peg.2454"/>
<dbReference type="eggNOG" id="COG0496">
    <property type="taxonomic scope" value="Bacteria"/>
</dbReference>
<dbReference type="HOGENOM" id="CLU_045192_1_2_6"/>
<dbReference type="Proteomes" id="UP000002493">
    <property type="component" value="Chromosome 1"/>
</dbReference>
<dbReference type="GO" id="GO:0005737">
    <property type="term" value="C:cytoplasm"/>
    <property type="evidence" value="ECO:0007669"/>
    <property type="project" value="UniProtKB-SubCell"/>
</dbReference>
<dbReference type="GO" id="GO:0008254">
    <property type="term" value="F:3'-nucleotidase activity"/>
    <property type="evidence" value="ECO:0007669"/>
    <property type="project" value="TreeGrafter"/>
</dbReference>
<dbReference type="GO" id="GO:0008253">
    <property type="term" value="F:5'-nucleotidase activity"/>
    <property type="evidence" value="ECO:0007669"/>
    <property type="project" value="UniProtKB-UniRule"/>
</dbReference>
<dbReference type="GO" id="GO:0004309">
    <property type="term" value="F:exopolyphosphatase activity"/>
    <property type="evidence" value="ECO:0007669"/>
    <property type="project" value="TreeGrafter"/>
</dbReference>
<dbReference type="GO" id="GO:0046872">
    <property type="term" value="F:metal ion binding"/>
    <property type="evidence" value="ECO:0007669"/>
    <property type="project" value="UniProtKB-UniRule"/>
</dbReference>
<dbReference type="GO" id="GO:0000166">
    <property type="term" value="F:nucleotide binding"/>
    <property type="evidence" value="ECO:0007669"/>
    <property type="project" value="UniProtKB-KW"/>
</dbReference>
<dbReference type="FunFam" id="3.40.1210.10:FF:000001">
    <property type="entry name" value="5'/3'-nucleotidase SurE"/>
    <property type="match status" value="1"/>
</dbReference>
<dbReference type="Gene3D" id="3.40.1210.10">
    <property type="entry name" value="Survival protein SurE-like phosphatase/nucleotidase"/>
    <property type="match status" value="1"/>
</dbReference>
<dbReference type="HAMAP" id="MF_00060">
    <property type="entry name" value="SurE"/>
    <property type="match status" value="1"/>
</dbReference>
<dbReference type="InterPro" id="IPR030048">
    <property type="entry name" value="SurE"/>
</dbReference>
<dbReference type="InterPro" id="IPR002828">
    <property type="entry name" value="SurE-like_Pase/nucleotidase"/>
</dbReference>
<dbReference type="InterPro" id="IPR036523">
    <property type="entry name" value="SurE-like_sf"/>
</dbReference>
<dbReference type="NCBIfam" id="NF001489">
    <property type="entry name" value="PRK00346.1-3"/>
    <property type="match status" value="1"/>
</dbReference>
<dbReference type="NCBIfam" id="NF001490">
    <property type="entry name" value="PRK00346.1-4"/>
    <property type="match status" value="1"/>
</dbReference>
<dbReference type="NCBIfam" id="TIGR00087">
    <property type="entry name" value="surE"/>
    <property type="match status" value="1"/>
</dbReference>
<dbReference type="PANTHER" id="PTHR30457">
    <property type="entry name" value="5'-NUCLEOTIDASE SURE"/>
    <property type="match status" value="1"/>
</dbReference>
<dbReference type="PANTHER" id="PTHR30457:SF12">
    <property type="entry name" value="5'_3'-NUCLEOTIDASE SURE"/>
    <property type="match status" value="1"/>
</dbReference>
<dbReference type="Pfam" id="PF01975">
    <property type="entry name" value="SurE"/>
    <property type="match status" value="1"/>
</dbReference>
<dbReference type="SUPFAM" id="SSF64167">
    <property type="entry name" value="SurE-like"/>
    <property type="match status" value="1"/>
</dbReference>
<comment type="function">
    <text evidence="1">Nucleotidase that shows phosphatase activity on nucleoside 5'-monophosphates.</text>
</comment>
<comment type="catalytic activity">
    <reaction evidence="1">
        <text>a ribonucleoside 5'-phosphate + H2O = a ribonucleoside + phosphate</text>
        <dbReference type="Rhea" id="RHEA:12484"/>
        <dbReference type="ChEBI" id="CHEBI:15377"/>
        <dbReference type="ChEBI" id="CHEBI:18254"/>
        <dbReference type="ChEBI" id="CHEBI:43474"/>
        <dbReference type="ChEBI" id="CHEBI:58043"/>
        <dbReference type="EC" id="3.1.3.5"/>
    </reaction>
</comment>
<comment type="cofactor">
    <cofactor evidence="1">
        <name>a divalent metal cation</name>
        <dbReference type="ChEBI" id="CHEBI:60240"/>
    </cofactor>
    <text evidence="1">Binds 1 divalent metal cation per subunit.</text>
</comment>
<comment type="subcellular location">
    <subcellularLocation>
        <location evidence="1">Cytoplasm</location>
    </subcellularLocation>
</comment>
<comment type="similarity">
    <text evidence="1">Belongs to the SurE nucleotidase family.</text>
</comment>
<protein>
    <recommendedName>
        <fullName evidence="1">5'-nucleotidase SurE</fullName>
        <ecNumber evidence="1">3.1.3.5</ecNumber>
    </recommendedName>
    <alternativeName>
        <fullName evidence="1">Nucleoside 5'-monophosphate phosphohydrolase</fullName>
    </alternativeName>
</protein>
<accession>Q87LQ5</accession>
<evidence type="ECO:0000255" key="1">
    <source>
        <dbReference type="HAMAP-Rule" id="MF_00060"/>
    </source>
</evidence>
<name>SURE_VIBPA</name>
<keyword id="KW-0963">Cytoplasm</keyword>
<keyword id="KW-0378">Hydrolase</keyword>
<keyword id="KW-0479">Metal-binding</keyword>
<keyword id="KW-0547">Nucleotide-binding</keyword>
<proteinExistence type="inferred from homology"/>
<gene>
    <name evidence="1" type="primary">surE</name>
    <name type="ordered locus">VP2556</name>
</gene>
<feature type="chain" id="PRO_0000111850" description="5'-nucleotidase SurE">
    <location>
        <begin position="1"/>
        <end position="258"/>
    </location>
</feature>
<feature type="binding site" evidence="1">
    <location>
        <position position="18"/>
    </location>
    <ligand>
        <name>a divalent metal cation</name>
        <dbReference type="ChEBI" id="CHEBI:60240"/>
    </ligand>
</feature>
<feature type="binding site" evidence="1">
    <location>
        <position position="19"/>
    </location>
    <ligand>
        <name>a divalent metal cation</name>
        <dbReference type="ChEBI" id="CHEBI:60240"/>
    </ligand>
</feature>
<feature type="binding site" evidence="1">
    <location>
        <position position="49"/>
    </location>
    <ligand>
        <name>a divalent metal cation</name>
        <dbReference type="ChEBI" id="CHEBI:60240"/>
    </ligand>
</feature>
<feature type="binding site" evidence="1">
    <location>
        <position position="102"/>
    </location>
    <ligand>
        <name>a divalent metal cation</name>
        <dbReference type="ChEBI" id="CHEBI:60240"/>
    </ligand>
</feature>
<sequence>MELDSLNTKPLRILISNDDGVHAQGIHALADELRSIAEVIIVAPDRNRSGASNSLTLEQPLRVSEIAPNTYSVQGTPTDCVHFALNELMKDDLPDLVLSGINHGANLGDDVLYSGTVAAAMEGHFLGVQAIAFSLVGKRHFESAAKIARQLVEQHLAAPIPTNRLLNVNVPDLPLESLGEIEVTRLGARHHAENMIKQKDPRGHDIYWLGPPGKEQDAGEGTDFYAIEHGRVSITPLQVDLTAHESLRAMDSWLKEEK</sequence>
<organism>
    <name type="scientific">Vibrio parahaemolyticus serotype O3:K6 (strain RIMD 2210633)</name>
    <dbReference type="NCBI Taxonomy" id="223926"/>
    <lineage>
        <taxon>Bacteria</taxon>
        <taxon>Pseudomonadati</taxon>
        <taxon>Pseudomonadota</taxon>
        <taxon>Gammaproteobacteria</taxon>
        <taxon>Vibrionales</taxon>
        <taxon>Vibrionaceae</taxon>
        <taxon>Vibrio</taxon>
    </lineage>
</organism>
<reference key="1">
    <citation type="journal article" date="2003" name="Lancet">
        <title>Genome sequence of Vibrio parahaemolyticus: a pathogenic mechanism distinct from that of V. cholerae.</title>
        <authorList>
            <person name="Makino K."/>
            <person name="Oshima K."/>
            <person name="Kurokawa K."/>
            <person name="Yokoyama K."/>
            <person name="Uda T."/>
            <person name="Tagomori K."/>
            <person name="Iijima Y."/>
            <person name="Najima M."/>
            <person name="Nakano M."/>
            <person name="Yamashita A."/>
            <person name="Kubota Y."/>
            <person name="Kimura S."/>
            <person name="Yasunaga T."/>
            <person name="Honda T."/>
            <person name="Shinagawa H."/>
            <person name="Hattori M."/>
            <person name="Iida T."/>
        </authorList>
    </citation>
    <scope>NUCLEOTIDE SEQUENCE [LARGE SCALE GENOMIC DNA]</scope>
    <source>
        <strain>RIMD 2210633</strain>
    </source>
</reference>